<gene>
    <name evidence="1" type="primary">tpiA</name>
    <name type="ordered locus">Mvan_2705</name>
</gene>
<evidence type="ECO:0000255" key="1">
    <source>
        <dbReference type="HAMAP-Rule" id="MF_00147"/>
    </source>
</evidence>
<dbReference type="EC" id="5.3.1.1" evidence="1"/>
<dbReference type="EMBL" id="CP000511">
    <property type="protein sequence ID" value="ABM13512.1"/>
    <property type="molecule type" value="Genomic_DNA"/>
</dbReference>
<dbReference type="RefSeq" id="WP_011779920.1">
    <property type="nucleotide sequence ID" value="NC_008726.1"/>
</dbReference>
<dbReference type="SMR" id="A1T8L2"/>
<dbReference type="STRING" id="350058.Mvan_2705"/>
<dbReference type="KEGG" id="mva:Mvan_2705"/>
<dbReference type="eggNOG" id="COG0149">
    <property type="taxonomic scope" value="Bacteria"/>
</dbReference>
<dbReference type="HOGENOM" id="CLU_024251_2_3_11"/>
<dbReference type="UniPathway" id="UPA00109">
    <property type="reaction ID" value="UER00189"/>
</dbReference>
<dbReference type="UniPathway" id="UPA00138"/>
<dbReference type="Proteomes" id="UP000009159">
    <property type="component" value="Chromosome"/>
</dbReference>
<dbReference type="GO" id="GO:0005829">
    <property type="term" value="C:cytosol"/>
    <property type="evidence" value="ECO:0007669"/>
    <property type="project" value="TreeGrafter"/>
</dbReference>
<dbReference type="GO" id="GO:0004807">
    <property type="term" value="F:triose-phosphate isomerase activity"/>
    <property type="evidence" value="ECO:0007669"/>
    <property type="project" value="UniProtKB-UniRule"/>
</dbReference>
<dbReference type="GO" id="GO:0006094">
    <property type="term" value="P:gluconeogenesis"/>
    <property type="evidence" value="ECO:0007669"/>
    <property type="project" value="UniProtKB-UniRule"/>
</dbReference>
<dbReference type="GO" id="GO:0046166">
    <property type="term" value="P:glyceraldehyde-3-phosphate biosynthetic process"/>
    <property type="evidence" value="ECO:0007669"/>
    <property type="project" value="TreeGrafter"/>
</dbReference>
<dbReference type="GO" id="GO:0019563">
    <property type="term" value="P:glycerol catabolic process"/>
    <property type="evidence" value="ECO:0007669"/>
    <property type="project" value="TreeGrafter"/>
</dbReference>
<dbReference type="GO" id="GO:0006096">
    <property type="term" value="P:glycolytic process"/>
    <property type="evidence" value="ECO:0007669"/>
    <property type="project" value="UniProtKB-UniRule"/>
</dbReference>
<dbReference type="CDD" id="cd00311">
    <property type="entry name" value="TIM"/>
    <property type="match status" value="1"/>
</dbReference>
<dbReference type="FunFam" id="3.20.20.70:FF:000020">
    <property type="entry name" value="Triosephosphate isomerase"/>
    <property type="match status" value="1"/>
</dbReference>
<dbReference type="Gene3D" id="3.20.20.70">
    <property type="entry name" value="Aldolase class I"/>
    <property type="match status" value="1"/>
</dbReference>
<dbReference type="HAMAP" id="MF_00147_B">
    <property type="entry name" value="TIM_B"/>
    <property type="match status" value="1"/>
</dbReference>
<dbReference type="InterPro" id="IPR013785">
    <property type="entry name" value="Aldolase_TIM"/>
</dbReference>
<dbReference type="InterPro" id="IPR035990">
    <property type="entry name" value="TIM_sf"/>
</dbReference>
<dbReference type="InterPro" id="IPR022896">
    <property type="entry name" value="TrioseP_Isoase_bac/euk"/>
</dbReference>
<dbReference type="InterPro" id="IPR000652">
    <property type="entry name" value="Triosephosphate_isomerase"/>
</dbReference>
<dbReference type="InterPro" id="IPR020861">
    <property type="entry name" value="Triosephosphate_isomerase_AS"/>
</dbReference>
<dbReference type="NCBIfam" id="TIGR00419">
    <property type="entry name" value="tim"/>
    <property type="match status" value="1"/>
</dbReference>
<dbReference type="PANTHER" id="PTHR21139">
    <property type="entry name" value="TRIOSEPHOSPHATE ISOMERASE"/>
    <property type="match status" value="1"/>
</dbReference>
<dbReference type="PANTHER" id="PTHR21139:SF42">
    <property type="entry name" value="TRIOSEPHOSPHATE ISOMERASE"/>
    <property type="match status" value="1"/>
</dbReference>
<dbReference type="Pfam" id="PF00121">
    <property type="entry name" value="TIM"/>
    <property type="match status" value="1"/>
</dbReference>
<dbReference type="SUPFAM" id="SSF51351">
    <property type="entry name" value="Triosephosphate isomerase (TIM)"/>
    <property type="match status" value="1"/>
</dbReference>
<dbReference type="PROSITE" id="PS00171">
    <property type="entry name" value="TIM_1"/>
    <property type="match status" value="1"/>
</dbReference>
<dbReference type="PROSITE" id="PS51440">
    <property type="entry name" value="TIM_2"/>
    <property type="match status" value="1"/>
</dbReference>
<keyword id="KW-0963">Cytoplasm</keyword>
<keyword id="KW-0312">Gluconeogenesis</keyword>
<keyword id="KW-0324">Glycolysis</keyword>
<keyword id="KW-0413">Isomerase</keyword>
<comment type="function">
    <text evidence="1">Involved in the gluconeogenesis. Catalyzes stereospecifically the conversion of dihydroxyacetone phosphate (DHAP) to D-glyceraldehyde-3-phosphate (G3P).</text>
</comment>
<comment type="catalytic activity">
    <reaction evidence="1">
        <text>D-glyceraldehyde 3-phosphate = dihydroxyacetone phosphate</text>
        <dbReference type="Rhea" id="RHEA:18585"/>
        <dbReference type="ChEBI" id="CHEBI:57642"/>
        <dbReference type="ChEBI" id="CHEBI:59776"/>
        <dbReference type="EC" id="5.3.1.1"/>
    </reaction>
</comment>
<comment type="pathway">
    <text evidence="1">Carbohydrate biosynthesis; gluconeogenesis.</text>
</comment>
<comment type="pathway">
    <text evidence="1">Carbohydrate degradation; glycolysis; D-glyceraldehyde 3-phosphate from glycerone phosphate: step 1/1.</text>
</comment>
<comment type="subunit">
    <text evidence="1">Homodimer.</text>
</comment>
<comment type="subcellular location">
    <subcellularLocation>
        <location evidence="1">Cytoplasm</location>
    </subcellularLocation>
</comment>
<comment type="similarity">
    <text evidence="1">Belongs to the triosephosphate isomerase family.</text>
</comment>
<name>TPIS_MYCVP</name>
<accession>A1T8L2</accession>
<protein>
    <recommendedName>
        <fullName evidence="1">Triosephosphate isomerase</fullName>
        <shortName evidence="1">TIM</shortName>
        <shortName evidence="1">TPI</shortName>
        <ecNumber evidence="1">5.3.1.1</ecNumber>
    </recommendedName>
    <alternativeName>
        <fullName evidence="1">Triose-phosphate isomerase</fullName>
    </alternativeName>
</protein>
<sequence length="261" mass="27413">MSRKPLIAGNWKMNLNHFEAIALVQKIAFSLPDKYFDKVDVTVIPPFTDLRSVQTLVDGDKLRLTYGAQDVSQHDSGAYTGEISGAFLAKLGCTFAVVGHSERRTYHNEDDALVAAKAAAAFKHGLTPIICIGEHLDVREAGNHVEYNVNQLRGSLAGLSAEQIGQAVIAYEPVWAIGTGRVASAADAQEVCKAIRDELGNLASPELAAGVRVLYGGSVNAKNVGEIVGQADVDGALVGGASLDGEQFSMLSAIAAGGPLP</sequence>
<proteinExistence type="inferred from homology"/>
<reference key="1">
    <citation type="submission" date="2006-12" db="EMBL/GenBank/DDBJ databases">
        <title>Complete sequence of Mycobacterium vanbaalenii PYR-1.</title>
        <authorList>
            <consortium name="US DOE Joint Genome Institute"/>
            <person name="Copeland A."/>
            <person name="Lucas S."/>
            <person name="Lapidus A."/>
            <person name="Barry K."/>
            <person name="Detter J.C."/>
            <person name="Glavina del Rio T."/>
            <person name="Hammon N."/>
            <person name="Israni S."/>
            <person name="Dalin E."/>
            <person name="Tice H."/>
            <person name="Pitluck S."/>
            <person name="Singan V."/>
            <person name="Schmutz J."/>
            <person name="Larimer F."/>
            <person name="Land M."/>
            <person name="Hauser L."/>
            <person name="Kyrpides N."/>
            <person name="Anderson I.J."/>
            <person name="Miller C."/>
            <person name="Richardson P."/>
        </authorList>
    </citation>
    <scope>NUCLEOTIDE SEQUENCE [LARGE SCALE GENOMIC DNA]</scope>
    <source>
        <strain>DSM 7251 / JCM 13017 / BCRC 16820 / KCTC 9966 / NRRL B-24157 / PYR-1</strain>
    </source>
</reference>
<feature type="chain" id="PRO_0000307510" description="Triosephosphate isomerase">
    <location>
        <begin position="1"/>
        <end position="261"/>
    </location>
</feature>
<feature type="active site" description="Electrophile" evidence="1">
    <location>
        <position position="100"/>
    </location>
</feature>
<feature type="active site" description="Proton acceptor" evidence="1">
    <location>
        <position position="172"/>
    </location>
</feature>
<feature type="binding site" evidence="1">
    <location>
        <begin position="10"/>
        <end position="12"/>
    </location>
    <ligand>
        <name>substrate</name>
    </ligand>
</feature>
<feature type="binding site" evidence="1">
    <location>
        <position position="178"/>
    </location>
    <ligand>
        <name>substrate</name>
    </ligand>
</feature>
<feature type="binding site" evidence="1">
    <location>
        <position position="218"/>
    </location>
    <ligand>
        <name>substrate</name>
    </ligand>
</feature>
<feature type="binding site" evidence="1">
    <location>
        <begin position="239"/>
        <end position="240"/>
    </location>
    <ligand>
        <name>substrate</name>
    </ligand>
</feature>
<organism>
    <name type="scientific">Mycolicibacterium vanbaalenii (strain DSM 7251 / JCM 13017 / BCRC 16820 / KCTC 9966 / NRRL B-24157 / PYR-1)</name>
    <name type="common">Mycobacterium vanbaalenii</name>
    <dbReference type="NCBI Taxonomy" id="350058"/>
    <lineage>
        <taxon>Bacteria</taxon>
        <taxon>Bacillati</taxon>
        <taxon>Actinomycetota</taxon>
        <taxon>Actinomycetes</taxon>
        <taxon>Mycobacteriales</taxon>
        <taxon>Mycobacteriaceae</taxon>
        <taxon>Mycolicibacterium</taxon>
    </lineage>
</organism>